<sequence>MARTKQTARKSTGGKAPRKQLATKAARKSAPTTGGVKKPHRYRPGTVALREIRKYQKSTELLIRKLPFQRLVREIAQDFKTDLRFQSHAVLALQEAAEAYLVGLFEDTNLCAIHAKRVTIMPKDIQLARRIRGERA</sequence>
<proteinExistence type="evidence at protein level"/>
<protein>
    <recommendedName>
        <fullName>Histone H3.3</fullName>
    </recommendedName>
</protein>
<evidence type="ECO:0000250" key="1"/>
<evidence type="ECO:0000250" key="2">
    <source>
        <dbReference type="UniProtKB" id="P59169"/>
    </source>
</evidence>
<evidence type="ECO:0000256" key="3">
    <source>
        <dbReference type="SAM" id="MobiDB-lite"/>
    </source>
</evidence>
<evidence type="ECO:0000269" key="4">
    <source>
    </source>
</evidence>
<evidence type="ECO:0000269" key="5">
    <source>
    </source>
</evidence>
<evidence type="ECO:0000305" key="6"/>
<comment type="function">
    <text>Variant histone H3 which replaces conventional H3 in a wide range of nucleosomes in active genes. Constitutes the predominant form of histone H3 in non-dividing cells and is incorporated into chromatin independently of DNA synthesis. Deposited at sites of nucleosomal displacement throughout transcribed genes, suggesting that it represents an epigenetic imprint of transcriptionally active chromatin. Nucleosomes wrap and compact DNA into chromatin, limiting DNA accessibility to the cellular machineries which require DNA as a template. Histones thereby play a central role in transcription regulation, DNA repair, DNA replication and chromosomal stability. DNA accessibility is regulated via a complex set of post-translational modifications of histones, also called histone code, and nucleosome remodeling.</text>
</comment>
<comment type="subunit">
    <text>The nucleosome is a histone octamer containing two molecules each of H2A, H2B, H3 and H4 assembled in one H3-H4 heterotetramer and two H2A-H2B heterodimers. The octamer wraps approximately 147 bp of DNA.</text>
</comment>
<comment type="subcellular location">
    <subcellularLocation>
        <location>Nucleus</location>
    </subcellularLocation>
    <subcellularLocation>
        <location>Chromosome</location>
    </subcellularLocation>
</comment>
<comment type="PTM">
    <text evidence="1 4">Acetylation is generally linked to gene activation. Can be acetylated to form H3K9ac, H3K14ac, H3K18ac and H3K23ac. H3K9ac could compete with H3K9me and prevent gene silencing. H3K9ac is restricted to euchromatin (By similarity). H3K9ac and H3K14ac are associated with chromatin during interphase. Deacetylation at the metaphase-anaphase transition and maintained up to telophase.</text>
</comment>
<comment type="PTM">
    <text evidence="1 4">Methylated to form mainly H3K4me, H3K9me, H3K18me, H3K23me, H3K27me and H3K36me. H3K4me1/2/3, H3K9me3, H3K27me3 and H3K36me1/2/3 are typical marks for euchromatin, whereas heterochromatic chromocenters are enriched in H3K9me1/2 and H3K27me1/2. H2BK143ub1 is probably prerequisite for H3K4me (By similarity). H3K4me2 and H3K9me2 remain associated with chromosomes during interphase and mitosis. Methylated in vitro by SET1 to form H3K9me and H3K27me.</text>
</comment>
<comment type="PTM">
    <text evidence="4 5">Phosphorylated to form H3T3ph, H3S10ph, H3T11ph and H3S28ph. H3S10ph and H3S28ph found from prophase to telophase. Restricted to chromocenters from prophase to early anaphase, but widespread along chromosomes at late stages of mitosis, when H3 is deacetylated. No phosphorylation detected during interphase. H3S28ph specifically formed by AUR3 while H3T3ph and H3T11ph are not produced by Aurora.</text>
</comment>
<comment type="similarity">
    <text evidence="6">Belongs to the histone H3 family.</text>
</comment>
<comment type="caution">
    <text evidence="6">To ensure consistency between histone entries, we follow the 'Brno' nomenclature for histone modifications, with positions referring to those used in the literature for the 'closest' model organism. Due to slight variations in histone sequences between organisms and to the presence of initiator methionine in UniProtKB/Swiss-Prot sequences, the actual positions of modified amino acids in the sequence generally differ. In this entry the following conventions are used: H3T3ph = phosphorylated Thr-4; H3K4me1/2/3 = mono-, di- and trimethylated Lys-5; H3K9ac = acetylated Lys-10; H3K9me1/2/3 = mono-, di- and trimethylated Lys-10; H3S10ph = phosphorylated Ser-11; H3T11ph = phosphorylated Thr-12; H3K14ac = acetylated Lys-15; H3K18ac = acetylated Lys-19; H3K18me = methylated Lys-19; H3K23ac = acetylated Lys-24; H3K23me = methylated Lys-24; H3K27me = methylated Lys-28; H3S28ph = phosphorylated Ser-29; H3K36me = methylated Lys-37.</text>
</comment>
<feature type="initiator methionine" description="Removed" evidence="1">
    <location>
        <position position="1"/>
    </location>
</feature>
<feature type="chain" id="PRO_0000280822" description="Histone H3.3">
    <location>
        <begin position="2"/>
        <end position="136"/>
    </location>
</feature>
<feature type="region of interest" description="Disordered" evidence="3">
    <location>
        <begin position="1"/>
        <end position="43"/>
    </location>
</feature>
<feature type="modified residue" description="Phosphothreonine" evidence="5">
    <location>
        <position position="4"/>
    </location>
</feature>
<feature type="modified residue" description="N6,N6,N6-trimethyllysine; alternate" evidence="1">
    <location>
        <position position="5"/>
    </location>
</feature>
<feature type="modified residue" description="N6,N6-dimethyllysine; alternate" evidence="4">
    <location>
        <position position="5"/>
    </location>
</feature>
<feature type="modified residue" description="N6-methyllysine; alternate" evidence="1">
    <location>
        <position position="5"/>
    </location>
</feature>
<feature type="modified residue" description="N6,N6,N6-trimethyllysine; alternate" evidence="1">
    <location>
        <position position="10"/>
    </location>
</feature>
<feature type="modified residue" description="N6,N6-dimethyllysine; alternate" evidence="4">
    <location>
        <position position="10"/>
    </location>
</feature>
<feature type="modified residue" description="N6-acetyllysine; alternate" evidence="2">
    <location>
        <position position="10"/>
    </location>
</feature>
<feature type="modified residue" description="N6-methyllysine; alternate" evidence="1">
    <location>
        <position position="10"/>
    </location>
</feature>
<feature type="modified residue" description="Phosphoserine" evidence="4">
    <location>
        <position position="11"/>
    </location>
</feature>
<feature type="modified residue" description="Phosphothreonine" evidence="5">
    <location>
        <position position="12"/>
    </location>
</feature>
<feature type="modified residue" description="N6-acetyllysine" evidence="2">
    <location>
        <position position="15"/>
    </location>
</feature>
<feature type="modified residue" description="N6-acetyllysine; alternate" evidence="2">
    <location>
        <position position="19"/>
    </location>
</feature>
<feature type="modified residue" description="N6-methylated lysine; alternate" evidence="1">
    <location>
        <position position="19"/>
    </location>
</feature>
<feature type="modified residue" description="N6-acetyllysine; alternate" evidence="2">
    <location>
        <position position="24"/>
    </location>
</feature>
<feature type="modified residue" description="N6-methylated lysine; alternate" evidence="1">
    <location>
        <position position="24"/>
    </location>
</feature>
<feature type="modified residue" description="N6-methylated lysine" evidence="1">
    <location>
        <position position="28"/>
    </location>
</feature>
<feature type="modified residue" description="Phosphoserine" evidence="5">
    <location>
        <position position="29"/>
    </location>
</feature>
<feature type="modified residue" description="N6-methylated lysine" evidence="1">
    <location>
        <position position="37"/>
    </location>
</feature>
<name>H33_TOBAC</name>
<reference key="1">
    <citation type="submission" date="1998-06" db="EMBL/GenBank/DDBJ databases">
        <title>Isolation of a cDNA encoding for tobacco histone H3.</title>
        <authorList>
            <person name="Ito M."/>
        </authorList>
    </citation>
    <scope>NUCLEOTIDE SEQUENCE [MRNA]</scope>
    <source>
        <strain>cv. Bright Yellow 2</strain>
    </source>
</reference>
<reference key="2">
    <citation type="journal article" date="2005" name="Plant J.">
        <title>Histone deacetylation is required for progression through mitosis in tobacco cells.</title>
        <authorList>
            <person name="Li Y."/>
            <person name="Butenko Y."/>
            <person name="Grafi G."/>
        </authorList>
    </citation>
    <scope>METHYLATION AT LYS-5 AND LYS-10</scope>
    <scope>ACETYLATION</scope>
    <scope>PHOSPHORYLATION AT SER-11</scope>
</reference>
<reference key="3">
    <citation type="journal article" date="2006" name="Plant J.">
        <title>Aurora kinase is required for chromosome segregation in tobacco BY-2 cells.</title>
        <authorList>
            <person name="Kurihara D."/>
            <person name="Matsunaga S."/>
            <person name="Kawabe A."/>
            <person name="Fujimoto S."/>
            <person name="Noda M."/>
            <person name="Uchiyama S."/>
            <person name="Fukui K."/>
        </authorList>
    </citation>
    <scope>PHOSPHORYLATION AT THR-4; THR-12 AND SER-29</scope>
</reference>
<keyword id="KW-0007">Acetylation</keyword>
<keyword id="KW-0158">Chromosome</keyword>
<keyword id="KW-0238">DNA-binding</keyword>
<keyword id="KW-0488">Methylation</keyword>
<keyword id="KW-0544">Nucleosome core</keyword>
<keyword id="KW-0539">Nucleus</keyword>
<keyword id="KW-0597">Phosphoprotein</keyword>
<keyword id="KW-1185">Reference proteome</keyword>
<dbReference type="EMBL" id="AB015760">
    <property type="protein sequence ID" value="BAA31218.1"/>
    <property type="molecule type" value="mRNA"/>
</dbReference>
<dbReference type="RefSeq" id="XP_016473270.1">
    <property type="nucleotide sequence ID" value="XM_016617784.1"/>
</dbReference>
<dbReference type="SMR" id="Q76N23"/>
<dbReference type="STRING" id="4097.Q76N23"/>
<dbReference type="iPTMnet" id="Q76N23"/>
<dbReference type="PaxDb" id="4097-Q76N23"/>
<dbReference type="KEGG" id="nta:107795199"/>
<dbReference type="KEGG" id="nta:107801897"/>
<dbReference type="KEGG" id="nta:107801898"/>
<dbReference type="KEGG" id="nta:107810536"/>
<dbReference type="KEGG" id="nta:107813079"/>
<dbReference type="KEGG" id="nta:107818315"/>
<dbReference type="OrthoDB" id="1225755at2759"/>
<dbReference type="PhylomeDB" id="Q76N23"/>
<dbReference type="Proteomes" id="UP000084051">
    <property type="component" value="Unplaced"/>
</dbReference>
<dbReference type="GO" id="GO:0000786">
    <property type="term" value="C:nucleosome"/>
    <property type="evidence" value="ECO:0007669"/>
    <property type="project" value="UniProtKB-KW"/>
</dbReference>
<dbReference type="GO" id="GO:0005634">
    <property type="term" value="C:nucleus"/>
    <property type="evidence" value="ECO:0000318"/>
    <property type="project" value="GO_Central"/>
</dbReference>
<dbReference type="GO" id="GO:0003677">
    <property type="term" value="F:DNA binding"/>
    <property type="evidence" value="ECO:0007669"/>
    <property type="project" value="UniProtKB-KW"/>
</dbReference>
<dbReference type="GO" id="GO:0046982">
    <property type="term" value="F:protein heterodimerization activity"/>
    <property type="evidence" value="ECO:0007669"/>
    <property type="project" value="InterPro"/>
</dbReference>
<dbReference type="GO" id="GO:0030527">
    <property type="term" value="F:structural constituent of chromatin"/>
    <property type="evidence" value="ECO:0007669"/>
    <property type="project" value="InterPro"/>
</dbReference>
<dbReference type="CDD" id="cd22911">
    <property type="entry name" value="HFD_H3"/>
    <property type="match status" value="1"/>
</dbReference>
<dbReference type="FunFam" id="1.10.20.10:FF:000078">
    <property type="entry name" value="Histone H3"/>
    <property type="match status" value="1"/>
</dbReference>
<dbReference type="FunFam" id="1.10.20.10:FF:000044">
    <property type="entry name" value="Histone H3.3"/>
    <property type="match status" value="1"/>
</dbReference>
<dbReference type="Gene3D" id="1.10.20.10">
    <property type="entry name" value="Histone, subunit A"/>
    <property type="match status" value="1"/>
</dbReference>
<dbReference type="InterPro" id="IPR009072">
    <property type="entry name" value="Histone-fold"/>
</dbReference>
<dbReference type="InterPro" id="IPR007125">
    <property type="entry name" value="Histone_H2A/H2B/H3"/>
</dbReference>
<dbReference type="InterPro" id="IPR000164">
    <property type="entry name" value="Histone_H3/CENP-A"/>
</dbReference>
<dbReference type="PANTHER" id="PTHR11426">
    <property type="entry name" value="HISTONE H3"/>
    <property type="match status" value="1"/>
</dbReference>
<dbReference type="Pfam" id="PF00125">
    <property type="entry name" value="Histone"/>
    <property type="match status" value="1"/>
</dbReference>
<dbReference type="PRINTS" id="PR00622">
    <property type="entry name" value="HISTONEH3"/>
</dbReference>
<dbReference type="SMART" id="SM00428">
    <property type="entry name" value="H3"/>
    <property type="match status" value="1"/>
</dbReference>
<dbReference type="SUPFAM" id="SSF47113">
    <property type="entry name" value="Histone-fold"/>
    <property type="match status" value="1"/>
</dbReference>
<dbReference type="PROSITE" id="PS00322">
    <property type="entry name" value="HISTONE_H3_1"/>
    <property type="match status" value="1"/>
</dbReference>
<dbReference type="PROSITE" id="PS00959">
    <property type="entry name" value="HISTONE_H3_2"/>
    <property type="match status" value="1"/>
</dbReference>
<gene>
    <name type="primary">H3</name>
</gene>
<organism>
    <name type="scientific">Nicotiana tabacum</name>
    <name type="common">Common tobacco</name>
    <dbReference type="NCBI Taxonomy" id="4097"/>
    <lineage>
        <taxon>Eukaryota</taxon>
        <taxon>Viridiplantae</taxon>
        <taxon>Streptophyta</taxon>
        <taxon>Embryophyta</taxon>
        <taxon>Tracheophyta</taxon>
        <taxon>Spermatophyta</taxon>
        <taxon>Magnoliopsida</taxon>
        <taxon>eudicotyledons</taxon>
        <taxon>Gunneridae</taxon>
        <taxon>Pentapetalae</taxon>
        <taxon>asterids</taxon>
        <taxon>lamiids</taxon>
        <taxon>Solanales</taxon>
        <taxon>Solanaceae</taxon>
        <taxon>Nicotianoideae</taxon>
        <taxon>Nicotianeae</taxon>
        <taxon>Nicotiana</taxon>
    </lineage>
</organism>
<accession>Q76N23</accession>